<feature type="chain" id="PRO_1000124534" description="Transcriptional repressor NrdR">
    <location>
        <begin position="1"/>
        <end position="154"/>
    </location>
</feature>
<feature type="domain" description="ATP-cone" evidence="1">
    <location>
        <begin position="49"/>
        <end position="139"/>
    </location>
</feature>
<feature type="zinc finger region" evidence="1">
    <location>
        <begin position="3"/>
        <end position="34"/>
    </location>
</feature>
<protein>
    <recommendedName>
        <fullName evidence="1">Transcriptional repressor NrdR</fullName>
    </recommendedName>
</protein>
<proteinExistence type="inferred from homology"/>
<organism>
    <name type="scientific">Pseudomonas putida (strain W619)</name>
    <dbReference type="NCBI Taxonomy" id="390235"/>
    <lineage>
        <taxon>Bacteria</taxon>
        <taxon>Pseudomonadati</taxon>
        <taxon>Pseudomonadota</taxon>
        <taxon>Gammaproteobacteria</taxon>
        <taxon>Pseudomonadales</taxon>
        <taxon>Pseudomonadaceae</taxon>
        <taxon>Pseudomonas</taxon>
    </lineage>
</organism>
<dbReference type="EMBL" id="CP000949">
    <property type="protein sequence ID" value="ACA71071.1"/>
    <property type="molecule type" value="Genomic_DNA"/>
</dbReference>
<dbReference type="SMR" id="B1J3F1"/>
<dbReference type="STRING" id="390235.PputW619_0566"/>
<dbReference type="KEGG" id="ppw:PputW619_0566"/>
<dbReference type="eggNOG" id="COG1327">
    <property type="taxonomic scope" value="Bacteria"/>
</dbReference>
<dbReference type="HOGENOM" id="CLU_108412_0_0_6"/>
<dbReference type="GO" id="GO:0005524">
    <property type="term" value="F:ATP binding"/>
    <property type="evidence" value="ECO:0007669"/>
    <property type="project" value="UniProtKB-KW"/>
</dbReference>
<dbReference type="GO" id="GO:0003677">
    <property type="term" value="F:DNA binding"/>
    <property type="evidence" value="ECO:0007669"/>
    <property type="project" value="UniProtKB-KW"/>
</dbReference>
<dbReference type="GO" id="GO:0008270">
    <property type="term" value="F:zinc ion binding"/>
    <property type="evidence" value="ECO:0007669"/>
    <property type="project" value="UniProtKB-UniRule"/>
</dbReference>
<dbReference type="GO" id="GO:0045892">
    <property type="term" value="P:negative regulation of DNA-templated transcription"/>
    <property type="evidence" value="ECO:0007669"/>
    <property type="project" value="UniProtKB-UniRule"/>
</dbReference>
<dbReference type="HAMAP" id="MF_00440">
    <property type="entry name" value="NrdR"/>
    <property type="match status" value="1"/>
</dbReference>
<dbReference type="InterPro" id="IPR005144">
    <property type="entry name" value="ATP-cone_dom"/>
</dbReference>
<dbReference type="InterPro" id="IPR055173">
    <property type="entry name" value="NrdR-like_N"/>
</dbReference>
<dbReference type="InterPro" id="IPR003796">
    <property type="entry name" value="RNR_NrdR-like"/>
</dbReference>
<dbReference type="NCBIfam" id="TIGR00244">
    <property type="entry name" value="transcriptional regulator NrdR"/>
    <property type="match status" value="1"/>
</dbReference>
<dbReference type="PANTHER" id="PTHR30455">
    <property type="entry name" value="TRANSCRIPTIONAL REPRESSOR NRDR"/>
    <property type="match status" value="1"/>
</dbReference>
<dbReference type="PANTHER" id="PTHR30455:SF2">
    <property type="entry name" value="TRANSCRIPTIONAL REPRESSOR NRDR"/>
    <property type="match status" value="1"/>
</dbReference>
<dbReference type="Pfam" id="PF03477">
    <property type="entry name" value="ATP-cone"/>
    <property type="match status" value="1"/>
</dbReference>
<dbReference type="Pfam" id="PF22811">
    <property type="entry name" value="Zn_ribbon_NrdR"/>
    <property type="match status" value="1"/>
</dbReference>
<dbReference type="PROSITE" id="PS51161">
    <property type="entry name" value="ATP_CONE"/>
    <property type="match status" value="1"/>
</dbReference>
<reference key="1">
    <citation type="submission" date="2008-02" db="EMBL/GenBank/DDBJ databases">
        <title>Complete sequence of Pseudomonas putida W619.</title>
        <authorList>
            <person name="Copeland A."/>
            <person name="Lucas S."/>
            <person name="Lapidus A."/>
            <person name="Barry K."/>
            <person name="Detter J.C."/>
            <person name="Glavina del Rio T."/>
            <person name="Dalin E."/>
            <person name="Tice H."/>
            <person name="Pitluck S."/>
            <person name="Chain P."/>
            <person name="Malfatti S."/>
            <person name="Shin M."/>
            <person name="Vergez L."/>
            <person name="Schmutz J."/>
            <person name="Larimer F."/>
            <person name="Land M."/>
            <person name="Hauser L."/>
            <person name="Kyrpides N."/>
            <person name="Kim E."/>
            <person name="Taghavi S."/>
            <person name="Vangronsveld D."/>
            <person name="van der Lelie D."/>
            <person name="Richardson P."/>
        </authorList>
    </citation>
    <scope>NUCLEOTIDE SEQUENCE [LARGE SCALE GENOMIC DNA]</scope>
    <source>
        <strain>W619</strain>
    </source>
</reference>
<evidence type="ECO:0000255" key="1">
    <source>
        <dbReference type="HAMAP-Rule" id="MF_00440"/>
    </source>
</evidence>
<name>NRDR_PSEPW</name>
<gene>
    <name evidence="1" type="primary">nrdR</name>
    <name type="ordered locus">PputW619_0566</name>
</gene>
<keyword id="KW-0067">ATP-binding</keyword>
<keyword id="KW-0238">DNA-binding</keyword>
<keyword id="KW-0479">Metal-binding</keyword>
<keyword id="KW-0547">Nucleotide-binding</keyword>
<keyword id="KW-0678">Repressor</keyword>
<keyword id="KW-0804">Transcription</keyword>
<keyword id="KW-0805">Transcription regulation</keyword>
<keyword id="KW-0862">Zinc</keyword>
<keyword id="KW-0863">Zinc-finger</keyword>
<accession>B1J3F1</accession>
<comment type="function">
    <text evidence="1">Negatively regulates transcription of bacterial ribonucleotide reductase nrd genes and operons by binding to NrdR-boxes.</text>
</comment>
<comment type="cofactor">
    <cofactor evidence="1">
        <name>Zn(2+)</name>
        <dbReference type="ChEBI" id="CHEBI:29105"/>
    </cofactor>
    <text evidence="1">Binds 1 zinc ion.</text>
</comment>
<comment type="similarity">
    <text evidence="1">Belongs to the NrdR family.</text>
</comment>
<sequence>MHCPFCGANDTKVIDSRLVAEGEQVRRRRECVACGERFTTFETAELVLPRLIKQDGTRQPFDEEKLRAGMQRALEKRPVSVERLEAALAHIKSRLRATGEREVKSLVVGELVMAELRKLDEVAYIRFASVYRRFQDLDEFREEIDRLAREPAKE</sequence>